<organism>
    <name type="scientific">Synechocystis sp. (strain ATCC 27184 / PCC 6803 / Kazusa)</name>
    <dbReference type="NCBI Taxonomy" id="1111708"/>
    <lineage>
        <taxon>Bacteria</taxon>
        <taxon>Bacillati</taxon>
        <taxon>Cyanobacteriota</taxon>
        <taxon>Cyanophyceae</taxon>
        <taxon>Synechococcales</taxon>
        <taxon>Merismopediaceae</taxon>
        <taxon>Synechocystis</taxon>
    </lineage>
</organism>
<comment type="function">
    <text evidence="3 4">When expressed in E.coli with Synechocystis PhaE and C.necator PhaA and PhaB, confers the ability to synthesize up to 13% (w/w) poly(3-hydroxybutyrate) (PHB) depending on the carbon source; all 4 genes are necessary for PHB production (PubMed:9683655). Cell-free in vitro coexpression with PhaE gives a heterodimer able to polymerize 3-hydroxybutyrate-CoA (PubMed:25629766).</text>
</comment>
<comment type="catalytic activity">
    <reaction evidence="3">
        <text>(3R)-3-hydroxybutanoyl-CoA + [(3R)-hydroxybutanoate](n) = [(3R)-hydroxybutanoate](n+1) + CoA</text>
        <dbReference type="Rhea" id="RHEA:15405"/>
        <dbReference type="Rhea" id="RHEA-COMP:14464"/>
        <dbReference type="Rhea" id="RHEA-COMP:14465"/>
        <dbReference type="ChEBI" id="CHEBI:8298"/>
        <dbReference type="ChEBI" id="CHEBI:57287"/>
        <dbReference type="ChEBI" id="CHEBI:57315"/>
    </reaction>
</comment>
<comment type="biophysicochemical properties">
    <kinetics>
        <KM evidence="3">478 uM for 3-hydroxybutyryl-CoA</KM>
    </kinetics>
</comment>
<comment type="pathway">
    <text evidence="7">Biopolymer metabolism; poly-(R)-3-hydroxybutanoate biosynthesis.</text>
</comment>
<comment type="subunit">
    <text evidence="3 4">Forms a heterodimer with PhaE, which may multimerize in the presence of 3-hydroxybutyryl-CoA (PubMed:25629766). Both subunits are required for PHB synthesis in E.coli and in PHA-negative A.eutrophus.</text>
</comment>
<comment type="subcellular location">
    <subcellularLocation>
        <location evidence="1">Cytoplasm</location>
    </subcellularLocation>
</comment>
<comment type="biotechnology">
    <text evidence="6">Poly(3-hydroxyalkanoic acids) (PHA), of which PHB is among the most common compounds, are prokaryotic intracellular storage compounds with potential uses as renewable, biodegradable thermoplastics. Cyanobacterial PHB synthesis is particularly attractive as cyanobacteria use CO(2) as the carbon source.</text>
</comment>
<comment type="miscellaneous">
    <text evidence="4">Nitrogen-free medium induces chlorosis in Synechocystis, leading to the degradation of the photosynthetic apparatus and concomitant accumulation of cytoplasmic polyhydroxyalkanoic acid (PHA) granules which in this cyanobacterium are composed of PHB.</text>
</comment>
<comment type="similarity">
    <text evidence="6">Belongs to the PHA/PHB synthase family. Type III PhaC subfamily.</text>
</comment>
<proteinExistence type="evidence at protein level"/>
<keyword id="KW-0012">Acyltransferase</keyword>
<keyword id="KW-0963">Cytoplasm</keyword>
<keyword id="KW-0583">PHB biosynthesis</keyword>
<keyword id="KW-1185">Reference proteome</keyword>
<keyword id="KW-0808">Transferase</keyword>
<protein>
    <recommendedName>
        <fullName>Poly(3-hydroxyalkanoate) polymerase subunit PhaC</fullName>
        <shortName>PHA polymerase</shortName>
        <ecNumber evidence="3">2.3.1.-</ecNumber>
    </recommendedName>
    <alternativeName>
        <fullName>PHB synthase subunit PhaC</fullName>
    </alternativeName>
    <alternativeName>
        <fullName>Poly(3-hydroxybutyrate) polymerase subunit PhaC</fullName>
        <shortName>PHB polymerase</shortName>
    </alternativeName>
    <alternativeName>
        <fullName>Poly(hydroxyalkanoic acid) synthase subunit PhaC</fullName>
        <shortName evidence="5">PHA synthase</shortName>
        <shortName evidence="5">Polyhydroxyalkanoic acid synthase subunit PhaC</shortName>
    </alternativeName>
</protein>
<evidence type="ECO:0000250" key="1"/>
<evidence type="ECO:0000255" key="2"/>
<evidence type="ECO:0000269" key="3">
    <source>
    </source>
</evidence>
<evidence type="ECO:0000269" key="4">
    <source>
    </source>
</evidence>
<evidence type="ECO:0000303" key="5">
    <source>
    </source>
</evidence>
<evidence type="ECO:0000305" key="6"/>
<evidence type="ECO:0000305" key="7">
    <source>
    </source>
</evidence>
<evidence type="ECO:0000312" key="8">
    <source>
        <dbReference type="EMBL" id="BAA17430.1"/>
    </source>
</evidence>
<feature type="chain" id="PRO_0000438832" description="Poly(3-hydroxyalkanoate) polymerase subunit PhaC">
    <location>
        <begin position="1"/>
        <end position="378"/>
    </location>
</feature>
<feature type="domain" description="AB hydrolase-1" evidence="2">
    <location>
        <begin position="84"/>
        <end position="356"/>
    </location>
</feature>
<reference key="1">
    <citation type="journal article" date="1996" name="DNA Res.">
        <title>Sequence analysis of the genome of the unicellular cyanobacterium Synechocystis sp. strain PCC6803. II. Sequence determination of the entire genome and assignment of potential protein-coding regions.</title>
        <authorList>
            <person name="Kaneko T."/>
            <person name="Sato S."/>
            <person name="Kotani H."/>
            <person name="Tanaka A."/>
            <person name="Asamizu E."/>
            <person name="Nakamura Y."/>
            <person name="Miyajima N."/>
            <person name="Hirosawa M."/>
            <person name="Sugiura M."/>
            <person name="Sasamoto S."/>
            <person name="Kimura T."/>
            <person name="Hosouchi T."/>
            <person name="Matsuno A."/>
            <person name="Muraki A."/>
            <person name="Nakazaki N."/>
            <person name="Naruo K."/>
            <person name="Okumura S."/>
            <person name="Shimpo S."/>
            <person name="Takeuchi C."/>
            <person name="Wada T."/>
            <person name="Watanabe A."/>
            <person name="Yamada M."/>
            <person name="Yasuda M."/>
            <person name="Tabata S."/>
        </authorList>
    </citation>
    <scope>NUCLEOTIDE SEQUENCE [LARGE SCALE GENOMIC DNA]</scope>
    <source>
        <strain>ATCC 27184 / PCC 6803 / Kazusa</strain>
    </source>
</reference>
<reference key="2">
    <citation type="journal article" date="1992" name="FEMS Microbiol. Rev.">
        <title>Molecular basis for biosynthesis and accumulation of polyhydroxyalkanoic acids in bacteria.</title>
        <authorList>
            <person name="Steinbuechel A."/>
            <person name="Hustede E."/>
            <person name="Liebergesell M."/>
            <person name="Pieper U."/>
            <person name="Timm A."/>
            <person name="Valentin H."/>
        </authorList>
    </citation>
    <scope>GENE NAME</scope>
</reference>
<reference key="3">
    <citation type="journal article" date="1998" name="Arch. Microbiol.">
        <title>Synechocystis sp. PCC6803 possesses a two-component polyhydroxyalkanoic acid synthase similar to that of anoxygenic purple sulfur bacteria.</title>
        <authorList>
            <person name="Hein S."/>
            <person name="Tran H."/>
            <person name="Steinbuechel A."/>
        </authorList>
    </citation>
    <scope>FUNCTION</scope>
    <scope>PATHWAY</scope>
    <scope>SUBUNIT</scope>
    <scope>EXPRESSION IN E.COLI</scope>
    <source>
        <strain>ATCC 27184 / PCC 6803 / N-1</strain>
    </source>
</reference>
<reference key="4">
    <citation type="journal article" date="2015" name="Biochemistry">
        <title>Co-expression of two polyhydroxyalkanoate synthase subunits from Synechocystis sp. PCC 6803 by cell-free synthesis and their specific activity for polymerization of 3-hydroxybutyryl-coenzyme A.</title>
        <authorList>
            <person name="Numata K."/>
            <person name="Motoda Y."/>
            <person name="Watanabe S."/>
            <person name="Osanai T."/>
            <person name="Kigawa T."/>
        </authorList>
    </citation>
    <scope>FUNCTION</scope>
    <scope>CATALYTIC ACTIVITY</scope>
    <scope>BIOPHYSICOCHEMICAL PROPERTIES</scope>
    <scope>SUBUNIT</scope>
    <source>
        <strain>ATCC 27184 / PCC 6803 / N-1</strain>
    </source>
</reference>
<sequence length="378" mass="42961">MFLLFFIVHWLKIMLPFFAQVGLEENLHETLDFTEKFLSGLENLQGLNEDDIQVGFTPKEAVYQEDKVILYRFQPVVENPLPIPVLIVYALVNRPYMVDLQEGRSLVANLLKLGLDVYLIDWGYPSRGDRWLTLEDYLSGYLNNCVDIICQRSQQEKITLLGVCQGGTFSLCYASLFPDKVKNLVVMVAPVDFEQPGTLLNARGGCTLGAEAVDIDLMVDAMGNIPGDYLNLEFLMLKPLQLGYQKYLDVPDIMGDEAKLLNFLRMEKWIFDSPDQAGETYRQFLKDFYQQNKLIKGEVMIGDRLVDLHNLTMPILNLYAEKDHLVAPASSLALGDYLPENCDYTVQSFPVGHIGMYVSGKVQRDLPPAIAHWLSERQ</sequence>
<name>PHAC_SYNY3</name>
<accession>P73390</accession>
<gene>
    <name evidence="5" type="primary">phaC</name>
    <name evidence="8" type="synonym">phbC</name>
    <name type="ordered locus">slr1830</name>
</gene>
<dbReference type="EC" id="2.3.1.-" evidence="3"/>
<dbReference type="EMBL" id="BA000022">
    <property type="protein sequence ID" value="BAA17430.1"/>
    <property type="molecule type" value="Genomic_DNA"/>
</dbReference>
<dbReference type="PIR" id="S77327">
    <property type="entry name" value="S77327"/>
</dbReference>
<dbReference type="SMR" id="P73390"/>
<dbReference type="STRING" id="1148.gene:10498294"/>
<dbReference type="ESTHER" id="synsp-PHBC">
    <property type="family name" value="PHA_synth_III_C"/>
</dbReference>
<dbReference type="PaxDb" id="1148-1652509"/>
<dbReference type="EnsemblBacteria" id="BAA17430">
    <property type="protein sequence ID" value="BAA17430"/>
    <property type="gene ID" value="BAA17430"/>
</dbReference>
<dbReference type="KEGG" id="syn:slr1830"/>
<dbReference type="eggNOG" id="COG3243">
    <property type="taxonomic scope" value="Bacteria"/>
</dbReference>
<dbReference type="InParanoid" id="P73390"/>
<dbReference type="PhylomeDB" id="P73390"/>
<dbReference type="UniPathway" id="UPA00917"/>
<dbReference type="Proteomes" id="UP000001425">
    <property type="component" value="Chromosome"/>
</dbReference>
<dbReference type="GO" id="GO:0005737">
    <property type="term" value="C:cytoplasm"/>
    <property type="evidence" value="ECO:0007669"/>
    <property type="project" value="UniProtKB-SubCell"/>
</dbReference>
<dbReference type="GO" id="GO:0016746">
    <property type="term" value="F:acyltransferase activity"/>
    <property type="evidence" value="ECO:0007669"/>
    <property type="project" value="UniProtKB-KW"/>
</dbReference>
<dbReference type="GO" id="GO:0042619">
    <property type="term" value="P:poly-hydroxybutyrate biosynthetic process"/>
    <property type="evidence" value="ECO:0000314"/>
    <property type="project" value="UniProtKB"/>
</dbReference>
<dbReference type="FunFam" id="3.40.50.1820:FF:000112">
    <property type="entry name" value="Poly(R)-hydroxyalkanoic acid synthase, class III, PhaC subunit"/>
    <property type="match status" value="1"/>
</dbReference>
<dbReference type="Gene3D" id="3.40.50.1820">
    <property type="entry name" value="alpha/beta hydrolase"/>
    <property type="match status" value="1"/>
</dbReference>
<dbReference type="InterPro" id="IPR000073">
    <property type="entry name" value="AB_hydrolase_1"/>
</dbReference>
<dbReference type="InterPro" id="IPR029058">
    <property type="entry name" value="AB_hydrolase_fold"/>
</dbReference>
<dbReference type="InterPro" id="IPR051321">
    <property type="entry name" value="PHA/PHB_synthase"/>
</dbReference>
<dbReference type="InterPro" id="IPR010125">
    <property type="entry name" value="PHA_synth_III_C"/>
</dbReference>
<dbReference type="NCBIfam" id="TIGR01836">
    <property type="entry name" value="PHA_synth_III_C"/>
    <property type="match status" value="1"/>
</dbReference>
<dbReference type="PANTHER" id="PTHR36837">
    <property type="entry name" value="POLY(3-HYDROXYALKANOATE) POLYMERASE SUBUNIT PHAC"/>
    <property type="match status" value="1"/>
</dbReference>
<dbReference type="PANTHER" id="PTHR36837:SF2">
    <property type="entry name" value="POLY(3-HYDROXYALKANOATE) POLYMERASE SUBUNIT PHAC"/>
    <property type="match status" value="1"/>
</dbReference>
<dbReference type="Pfam" id="PF00561">
    <property type="entry name" value="Abhydrolase_1"/>
    <property type="match status" value="1"/>
</dbReference>
<dbReference type="SUPFAM" id="SSF53474">
    <property type="entry name" value="alpha/beta-Hydrolases"/>
    <property type="match status" value="1"/>
</dbReference>